<proteinExistence type="inferred from homology"/>
<protein>
    <recommendedName>
        <fullName evidence="1">Protein ApaG</fullName>
    </recommendedName>
</protein>
<reference key="1">
    <citation type="journal article" date="2008" name="BMC Genomics">
        <title>Genome sequence and rapid evolution of the rice pathogen Xanthomonas oryzae pv. oryzae PXO99A.</title>
        <authorList>
            <person name="Salzberg S.L."/>
            <person name="Sommer D.D."/>
            <person name="Schatz M.C."/>
            <person name="Phillippy A.M."/>
            <person name="Rabinowicz P.D."/>
            <person name="Tsuge S."/>
            <person name="Furutani A."/>
            <person name="Ochiai H."/>
            <person name="Delcher A.L."/>
            <person name="Kelley D."/>
            <person name="Madupu R."/>
            <person name="Puiu D."/>
            <person name="Radune D."/>
            <person name="Shumway M."/>
            <person name="Trapnell C."/>
            <person name="Aparna G."/>
            <person name="Jha G."/>
            <person name="Pandey A."/>
            <person name="Patil P.B."/>
            <person name="Ishihara H."/>
            <person name="Meyer D.F."/>
            <person name="Szurek B."/>
            <person name="Verdier V."/>
            <person name="Koebnik R."/>
            <person name="Dow J.M."/>
            <person name="Ryan R.P."/>
            <person name="Hirata H."/>
            <person name="Tsuyumu S."/>
            <person name="Won Lee S."/>
            <person name="Seo Y.-S."/>
            <person name="Sriariyanum M."/>
            <person name="Ronald P.C."/>
            <person name="Sonti R.V."/>
            <person name="Van Sluys M.-A."/>
            <person name="Leach J.E."/>
            <person name="White F.F."/>
            <person name="Bogdanove A.J."/>
        </authorList>
    </citation>
    <scope>NUCLEOTIDE SEQUENCE [LARGE SCALE GENOMIC DNA]</scope>
    <source>
        <strain>PXO99A</strain>
    </source>
</reference>
<dbReference type="EMBL" id="CP000967">
    <property type="protein sequence ID" value="ACD57769.1"/>
    <property type="molecule type" value="Genomic_DNA"/>
</dbReference>
<dbReference type="RefSeq" id="WP_011260169.1">
    <property type="nucleotide sequence ID" value="NC_010717.2"/>
</dbReference>
<dbReference type="BMRB" id="B2SPT2"/>
<dbReference type="SMR" id="B2SPT2"/>
<dbReference type="KEGG" id="xop:PXO_04646"/>
<dbReference type="eggNOG" id="COG2967">
    <property type="taxonomic scope" value="Bacteria"/>
</dbReference>
<dbReference type="HOGENOM" id="CLU_128074_0_0_6"/>
<dbReference type="Proteomes" id="UP000001740">
    <property type="component" value="Chromosome"/>
</dbReference>
<dbReference type="GO" id="GO:0070987">
    <property type="term" value="P:error-free translesion synthesis"/>
    <property type="evidence" value="ECO:0007669"/>
    <property type="project" value="TreeGrafter"/>
</dbReference>
<dbReference type="Gene3D" id="2.60.40.1470">
    <property type="entry name" value="ApaG domain"/>
    <property type="match status" value="1"/>
</dbReference>
<dbReference type="HAMAP" id="MF_00791">
    <property type="entry name" value="ApaG"/>
    <property type="match status" value="1"/>
</dbReference>
<dbReference type="InterPro" id="IPR007474">
    <property type="entry name" value="ApaG_domain"/>
</dbReference>
<dbReference type="InterPro" id="IPR036767">
    <property type="entry name" value="ApaG_sf"/>
</dbReference>
<dbReference type="InterPro" id="IPR023065">
    <property type="entry name" value="Uncharacterised_ApaG"/>
</dbReference>
<dbReference type="NCBIfam" id="NF003967">
    <property type="entry name" value="PRK05461.1"/>
    <property type="match status" value="1"/>
</dbReference>
<dbReference type="PANTHER" id="PTHR14289">
    <property type="entry name" value="F-BOX ONLY PROTEIN 3"/>
    <property type="match status" value="1"/>
</dbReference>
<dbReference type="PANTHER" id="PTHR14289:SF16">
    <property type="entry name" value="POLYMERASE DELTA-INTERACTING PROTEIN 2"/>
    <property type="match status" value="1"/>
</dbReference>
<dbReference type="Pfam" id="PF04379">
    <property type="entry name" value="DUF525"/>
    <property type="match status" value="1"/>
</dbReference>
<dbReference type="SUPFAM" id="SSF110069">
    <property type="entry name" value="ApaG-like"/>
    <property type="match status" value="1"/>
</dbReference>
<dbReference type="PROSITE" id="PS51087">
    <property type="entry name" value="APAG"/>
    <property type="match status" value="1"/>
</dbReference>
<sequence length="127" mass="14175">MHDDPRYRVEVEVSPRFLAHQSTPDEGRYAFAYSIRIQNAGAVPARLIARHWQITDGNGRTEQVDGEGVVGEQPRLRPGEAFHYTSGVLLETEQGQMQGHYDMVADDGTEFIAPIAAFVLSVPRTLH</sequence>
<accession>B2SPT2</accession>
<gene>
    <name evidence="1" type="primary">apaG</name>
    <name type="ordered locus">PXO_04646</name>
</gene>
<evidence type="ECO:0000255" key="1">
    <source>
        <dbReference type="HAMAP-Rule" id="MF_00791"/>
    </source>
</evidence>
<name>APAG_XANOP</name>
<organism>
    <name type="scientific">Xanthomonas oryzae pv. oryzae (strain PXO99A)</name>
    <dbReference type="NCBI Taxonomy" id="360094"/>
    <lineage>
        <taxon>Bacteria</taxon>
        <taxon>Pseudomonadati</taxon>
        <taxon>Pseudomonadota</taxon>
        <taxon>Gammaproteobacteria</taxon>
        <taxon>Lysobacterales</taxon>
        <taxon>Lysobacteraceae</taxon>
        <taxon>Xanthomonas</taxon>
    </lineage>
</organism>
<feature type="chain" id="PRO_1000133820" description="Protein ApaG">
    <location>
        <begin position="1"/>
        <end position="127"/>
    </location>
</feature>
<feature type="domain" description="ApaG" evidence="1">
    <location>
        <begin position="3"/>
        <end position="127"/>
    </location>
</feature>